<organism>
    <name type="scientific">Arabidopsis thaliana</name>
    <name type="common">Mouse-ear cress</name>
    <dbReference type="NCBI Taxonomy" id="3702"/>
    <lineage>
        <taxon>Eukaryota</taxon>
        <taxon>Viridiplantae</taxon>
        <taxon>Streptophyta</taxon>
        <taxon>Embryophyta</taxon>
        <taxon>Tracheophyta</taxon>
        <taxon>Spermatophyta</taxon>
        <taxon>Magnoliopsida</taxon>
        <taxon>eudicotyledons</taxon>
        <taxon>Gunneridae</taxon>
        <taxon>Pentapetalae</taxon>
        <taxon>rosids</taxon>
        <taxon>malvids</taxon>
        <taxon>Brassicales</taxon>
        <taxon>Brassicaceae</taxon>
        <taxon>Camelineae</taxon>
        <taxon>Arabidopsis</taxon>
    </lineage>
</organism>
<accession>Q9FKG5</accession>
<accession>Q0WQF2</accession>
<feature type="chain" id="PRO_0000322144" description="U-box domain-containing protein 51">
    <location>
        <begin position="1"/>
        <end position="796"/>
    </location>
</feature>
<feature type="domain" description="Protein kinase" evidence="3">
    <location>
        <begin position="429"/>
        <end position="700"/>
    </location>
</feature>
<feature type="domain" description="U-box">
    <location>
        <begin position="724"/>
        <end position="796"/>
    </location>
</feature>
<feature type="region of interest" description="Disordered" evidence="5">
    <location>
        <begin position="163"/>
        <end position="195"/>
    </location>
</feature>
<feature type="region of interest" description="Disordered" evidence="5">
    <location>
        <begin position="218"/>
        <end position="240"/>
    </location>
</feature>
<feature type="region of interest" description="Disordered" evidence="5">
    <location>
        <begin position="270"/>
        <end position="292"/>
    </location>
</feature>
<feature type="coiled-coil region" evidence="2">
    <location>
        <begin position="298"/>
        <end position="407"/>
    </location>
</feature>
<feature type="compositionally biased region" description="Basic and acidic residues" evidence="5">
    <location>
        <begin position="171"/>
        <end position="181"/>
    </location>
</feature>
<feature type="compositionally biased region" description="Low complexity" evidence="5">
    <location>
        <begin position="182"/>
        <end position="195"/>
    </location>
</feature>
<feature type="compositionally biased region" description="Low complexity" evidence="5">
    <location>
        <begin position="270"/>
        <end position="291"/>
    </location>
</feature>
<feature type="active site" description="Proton acceptor" evidence="3 4">
    <location>
        <position position="557"/>
    </location>
</feature>
<feature type="binding site" evidence="3">
    <location>
        <begin position="435"/>
        <end position="443"/>
    </location>
    <ligand>
        <name>ATP</name>
        <dbReference type="ChEBI" id="CHEBI:30616"/>
    </ligand>
</feature>
<feature type="binding site" evidence="3">
    <location>
        <position position="456"/>
    </location>
    <ligand>
        <name>ATP</name>
        <dbReference type="ChEBI" id="CHEBI:30616"/>
    </ligand>
</feature>
<feature type="splice variant" id="VSP_031882" description="In isoform 2." evidence="6">
    <location>
        <begin position="1"/>
        <end position="273"/>
    </location>
</feature>
<reference key="1">
    <citation type="journal article" date="1998" name="DNA Res.">
        <title>Structural analysis of Arabidopsis thaliana chromosome 5. VI. Sequence features of the regions of 1,367,185 bp covered by 19 physically assigned P1 and TAC clones.</title>
        <authorList>
            <person name="Kotani H."/>
            <person name="Nakamura Y."/>
            <person name="Sato S."/>
            <person name="Asamizu E."/>
            <person name="Kaneko T."/>
            <person name="Miyajima N."/>
            <person name="Tabata S."/>
        </authorList>
    </citation>
    <scope>NUCLEOTIDE SEQUENCE [LARGE SCALE GENOMIC DNA]</scope>
    <source>
        <strain>cv. Columbia</strain>
    </source>
</reference>
<reference key="2">
    <citation type="journal article" date="2017" name="Plant J.">
        <title>Araport11: a complete reannotation of the Arabidopsis thaliana reference genome.</title>
        <authorList>
            <person name="Cheng C.Y."/>
            <person name="Krishnakumar V."/>
            <person name="Chan A.P."/>
            <person name="Thibaud-Nissen F."/>
            <person name="Schobel S."/>
            <person name="Town C.D."/>
        </authorList>
    </citation>
    <scope>GENOME REANNOTATION</scope>
    <source>
        <strain>cv. Columbia</strain>
    </source>
</reference>
<reference key="3">
    <citation type="submission" date="2006-07" db="EMBL/GenBank/DDBJ databases">
        <title>Large-scale analysis of RIKEN Arabidopsis full-length (RAFL) cDNAs.</title>
        <authorList>
            <person name="Totoki Y."/>
            <person name="Seki M."/>
            <person name="Ishida J."/>
            <person name="Nakajima M."/>
            <person name="Enju A."/>
            <person name="Kamiya A."/>
            <person name="Narusaka M."/>
            <person name="Shin-i T."/>
            <person name="Nakagawa M."/>
            <person name="Sakamoto N."/>
            <person name="Oishi K."/>
            <person name="Kohara Y."/>
            <person name="Kobayashi M."/>
            <person name="Toyoda A."/>
            <person name="Sakaki Y."/>
            <person name="Sakurai T."/>
            <person name="Iida K."/>
            <person name="Akiyama K."/>
            <person name="Satou M."/>
            <person name="Toyoda T."/>
            <person name="Konagaya A."/>
            <person name="Carninci P."/>
            <person name="Kawai J."/>
            <person name="Hayashizaki Y."/>
            <person name="Shinozaki K."/>
        </authorList>
    </citation>
    <scope>NUCLEOTIDE SEQUENCE [LARGE SCALE MRNA] (ISOFORM 2)</scope>
    <source>
        <strain>cv. Columbia</strain>
    </source>
</reference>
<evidence type="ECO:0000250" key="1"/>
<evidence type="ECO:0000255" key="2"/>
<evidence type="ECO:0000255" key="3">
    <source>
        <dbReference type="PROSITE-ProRule" id="PRU00159"/>
    </source>
</evidence>
<evidence type="ECO:0000255" key="4">
    <source>
        <dbReference type="PROSITE-ProRule" id="PRU10027"/>
    </source>
</evidence>
<evidence type="ECO:0000256" key="5">
    <source>
        <dbReference type="SAM" id="MobiDB-lite"/>
    </source>
</evidence>
<evidence type="ECO:0000303" key="6">
    <source ref="3"/>
</evidence>
<evidence type="ECO:0000305" key="7"/>
<name>PUB51_ARATH</name>
<proteinExistence type="evidence at transcript level"/>
<sequence>MGDGALIVAVAIKGNNSKTKGVVRWALQEFASQEHVVFKLLHVQPRDSNSVSTTRKDLTTSVYKKDVDRKTREMLLPSRDMFVHREVQLDIMVLESDDIADAISKAVQDHGISELVIGASSSIIFSWKLKRSNLSSRIADATPRFCSVHVISKGKLLNVRKSDMDTETSIADDRSESRFSSDSHSGTVSSTSSHQFSSTPLLFQRIQALTTVNQKVGTNIGKQNNEPHHHHHNRAGSLDVDESKLLNQKGFYRTSSSGIGYGGSDISSWRSSQMEEASSSSTYSDPTSSSSQIHKDFELEKLKIELRHIKGMYAVAQSEVIDASKKMQDLNQRRSEEATRLKNLTIREEEADEVVEMERERQEDAENEAELVRECIERETEERLEAEARAEEVRKEKQRLEDALEGGPLQRQQYMKFEWEEIVEATSSFSDELKIGVGGYGSVYRCNLHHTTVAVKVLHSDKSSLTKQFHQELEILSKIRHPHLLLLLGACPERGSLVYEYMHNGSLEERLMKRRPNVDTPQPPPLRWFERFRIAWEIASALYFLHTNEPRPIVHRDLKPANILLDRNNVSKIGDVGLSKMVNLDPSHASTVFNETGPVGTFFYIDPEYQRTGVVTPESDIYAFGIILLQLVTARSAMGLAHSIEKALRDQTGKFTEILDKTAGDWPVKEAKEMVMIGLRCAEMRKRDRPDLGKEILPVLERLKEVASIARNMFADNLIDHHHNAPTHFYCPITKDVMENPCVASDGYTYEKRAIKEWLQKNHKSPMTDLPFPSDSLLPNHSLLSAIKEWRSQLIK</sequence>
<comment type="function">
    <text evidence="1">Functions as an E3 ubiquitin ligase.</text>
</comment>
<comment type="catalytic activity">
    <reaction>
        <text>L-seryl-[protein] + ATP = O-phospho-L-seryl-[protein] + ADP + H(+)</text>
        <dbReference type="Rhea" id="RHEA:17989"/>
        <dbReference type="Rhea" id="RHEA-COMP:9863"/>
        <dbReference type="Rhea" id="RHEA-COMP:11604"/>
        <dbReference type="ChEBI" id="CHEBI:15378"/>
        <dbReference type="ChEBI" id="CHEBI:29999"/>
        <dbReference type="ChEBI" id="CHEBI:30616"/>
        <dbReference type="ChEBI" id="CHEBI:83421"/>
        <dbReference type="ChEBI" id="CHEBI:456216"/>
    </reaction>
</comment>
<comment type="catalytic activity">
    <reaction>
        <text>L-threonyl-[protein] + ATP = O-phospho-L-threonyl-[protein] + ADP + H(+)</text>
        <dbReference type="Rhea" id="RHEA:46608"/>
        <dbReference type="Rhea" id="RHEA-COMP:11060"/>
        <dbReference type="Rhea" id="RHEA-COMP:11605"/>
        <dbReference type="ChEBI" id="CHEBI:15378"/>
        <dbReference type="ChEBI" id="CHEBI:30013"/>
        <dbReference type="ChEBI" id="CHEBI:30616"/>
        <dbReference type="ChEBI" id="CHEBI:61977"/>
        <dbReference type="ChEBI" id="CHEBI:456216"/>
    </reaction>
</comment>
<comment type="catalytic activity">
    <reaction>
        <text>S-ubiquitinyl-[E2 ubiquitin-conjugating enzyme]-L-cysteine + [acceptor protein]-L-lysine = [E2 ubiquitin-conjugating enzyme]-L-cysteine + N(6)-ubiquitinyl-[acceptor protein]-L-lysine.</text>
        <dbReference type="EC" id="2.3.2.27"/>
    </reaction>
</comment>
<comment type="pathway">
    <text>Protein modification; protein ubiquitination.</text>
</comment>
<comment type="alternative products">
    <event type="alternative splicing"/>
    <isoform>
        <id>Q9FKG5-1</id>
        <name>1</name>
        <sequence type="displayed"/>
    </isoform>
    <isoform>
        <id>Q9FKG5-2</id>
        <name>2</name>
        <sequence type="described" ref="VSP_031882"/>
    </isoform>
</comment>
<comment type="miscellaneous">
    <molecule>Isoform 2</molecule>
    <text evidence="7">May be due to intron retention.</text>
</comment>
<comment type="similarity">
    <text evidence="3">Belongs to the protein kinase superfamily. Ser/Thr protein kinase family.</text>
</comment>
<comment type="sequence caution" evidence="7">
    <conflict type="erroneous gene model prediction">
        <sequence resource="EMBL-CDS" id="BAB09000"/>
    </conflict>
</comment>
<gene>
    <name type="primary">PUB51</name>
    <name type="ordered locus">At5g61560</name>
    <name type="ORF">K11J9.9</name>
</gene>
<keyword id="KW-0025">Alternative splicing</keyword>
<keyword id="KW-0067">ATP-binding</keyword>
<keyword id="KW-0175">Coiled coil</keyword>
<keyword id="KW-0418">Kinase</keyword>
<keyword id="KW-0547">Nucleotide-binding</keyword>
<keyword id="KW-1185">Reference proteome</keyword>
<keyword id="KW-0723">Serine/threonine-protein kinase</keyword>
<keyword id="KW-0808">Transferase</keyword>
<keyword id="KW-0833">Ubl conjugation pathway</keyword>
<dbReference type="EC" id="2.3.2.27"/>
<dbReference type="EC" id="2.7.11.-"/>
<dbReference type="EMBL" id="AB012239">
    <property type="protein sequence ID" value="BAB09000.1"/>
    <property type="status" value="ALT_SEQ"/>
    <property type="molecule type" value="Genomic_DNA"/>
</dbReference>
<dbReference type="EMBL" id="CP002688">
    <property type="protein sequence ID" value="AED97488.1"/>
    <property type="molecule type" value="Genomic_DNA"/>
</dbReference>
<dbReference type="EMBL" id="CP002688">
    <property type="protein sequence ID" value="ANM69008.1"/>
    <property type="molecule type" value="Genomic_DNA"/>
</dbReference>
<dbReference type="EMBL" id="AK228747">
    <property type="protein sequence ID" value="BAF00647.1"/>
    <property type="molecule type" value="mRNA"/>
</dbReference>
<dbReference type="RefSeq" id="NP_001330718.1">
    <molecule id="Q9FKG5-1"/>
    <property type="nucleotide sequence ID" value="NM_001345484.1"/>
</dbReference>
<dbReference type="RefSeq" id="NP_200964.2">
    <molecule id="Q9FKG5-1"/>
    <property type="nucleotide sequence ID" value="NM_125549.3"/>
</dbReference>
<dbReference type="SMR" id="Q9FKG5"/>
<dbReference type="FunCoup" id="Q9FKG5">
    <property type="interactions" value="8"/>
</dbReference>
<dbReference type="STRING" id="3702.Q9FKG5"/>
<dbReference type="iPTMnet" id="Q9FKG5"/>
<dbReference type="PaxDb" id="3702-AT5G61560.1"/>
<dbReference type="EnsemblPlants" id="AT5G61560.1">
    <molecule id="Q9FKG5-1"/>
    <property type="protein sequence ID" value="AT5G61560.1"/>
    <property type="gene ID" value="AT5G61560"/>
</dbReference>
<dbReference type="EnsemblPlants" id="AT5G61560.5">
    <molecule id="Q9FKG5-1"/>
    <property type="protein sequence ID" value="AT5G61560.5"/>
    <property type="gene ID" value="AT5G61560"/>
</dbReference>
<dbReference type="GeneID" id="836277"/>
<dbReference type="Gramene" id="AT5G61560.1">
    <molecule id="Q9FKG5-1"/>
    <property type="protein sequence ID" value="AT5G61560.1"/>
    <property type="gene ID" value="AT5G61560"/>
</dbReference>
<dbReference type="Gramene" id="AT5G61560.5">
    <molecule id="Q9FKG5-1"/>
    <property type="protein sequence ID" value="AT5G61560.5"/>
    <property type="gene ID" value="AT5G61560"/>
</dbReference>
<dbReference type="KEGG" id="ath:AT5G61560"/>
<dbReference type="Araport" id="AT5G61560"/>
<dbReference type="TAIR" id="AT5G61560"/>
<dbReference type="eggNOG" id="ENOG502QQ92">
    <property type="taxonomic scope" value="Eukaryota"/>
</dbReference>
<dbReference type="InParanoid" id="Q9FKG5"/>
<dbReference type="OrthoDB" id="10064100at2759"/>
<dbReference type="PhylomeDB" id="Q9FKG5"/>
<dbReference type="UniPathway" id="UPA00143"/>
<dbReference type="PRO" id="PR:Q9FKG5"/>
<dbReference type="Proteomes" id="UP000006548">
    <property type="component" value="Chromosome 5"/>
</dbReference>
<dbReference type="ExpressionAtlas" id="Q9FKG5">
    <property type="expression patterns" value="baseline and differential"/>
</dbReference>
<dbReference type="GO" id="GO:0009507">
    <property type="term" value="C:chloroplast"/>
    <property type="evidence" value="ECO:0007005"/>
    <property type="project" value="TAIR"/>
</dbReference>
<dbReference type="GO" id="GO:0005524">
    <property type="term" value="F:ATP binding"/>
    <property type="evidence" value="ECO:0007669"/>
    <property type="project" value="UniProtKB-KW"/>
</dbReference>
<dbReference type="GO" id="GO:0106310">
    <property type="term" value="F:protein serine kinase activity"/>
    <property type="evidence" value="ECO:0007669"/>
    <property type="project" value="RHEA"/>
</dbReference>
<dbReference type="GO" id="GO:0004674">
    <property type="term" value="F:protein serine/threonine kinase activity"/>
    <property type="evidence" value="ECO:0007669"/>
    <property type="project" value="UniProtKB-KW"/>
</dbReference>
<dbReference type="GO" id="GO:0004842">
    <property type="term" value="F:ubiquitin-protein transferase activity"/>
    <property type="evidence" value="ECO:0007669"/>
    <property type="project" value="InterPro"/>
</dbReference>
<dbReference type="GO" id="GO:0016567">
    <property type="term" value="P:protein ubiquitination"/>
    <property type="evidence" value="ECO:0007669"/>
    <property type="project" value="UniProtKB-UniPathway"/>
</dbReference>
<dbReference type="CDD" id="cd16655">
    <property type="entry name" value="RING-Ubox_WDSUB1-like"/>
    <property type="match status" value="1"/>
</dbReference>
<dbReference type="CDD" id="cd01989">
    <property type="entry name" value="USP_STK_Ubox_N"/>
    <property type="match status" value="1"/>
</dbReference>
<dbReference type="FunFam" id="1.10.510.10:FF:000498">
    <property type="entry name" value="U-box domain-containing protein 51"/>
    <property type="match status" value="1"/>
</dbReference>
<dbReference type="FunFam" id="3.30.40.10:FF:000863">
    <property type="entry name" value="U-box domain-containing protein kinase family protein"/>
    <property type="match status" value="1"/>
</dbReference>
<dbReference type="Gene3D" id="3.40.50.620">
    <property type="entry name" value="HUPs"/>
    <property type="match status" value="1"/>
</dbReference>
<dbReference type="Gene3D" id="3.30.200.20">
    <property type="entry name" value="Phosphorylase Kinase, domain 1"/>
    <property type="match status" value="1"/>
</dbReference>
<dbReference type="Gene3D" id="1.10.510.10">
    <property type="entry name" value="Transferase(Phosphotransferase) domain 1"/>
    <property type="match status" value="1"/>
</dbReference>
<dbReference type="Gene3D" id="3.30.40.10">
    <property type="entry name" value="Zinc/RING finger domain, C3HC4 (zinc finger)"/>
    <property type="match status" value="1"/>
</dbReference>
<dbReference type="InterPro" id="IPR011009">
    <property type="entry name" value="Kinase-like_dom_sf"/>
</dbReference>
<dbReference type="InterPro" id="IPR000719">
    <property type="entry name" value="Prot_kinase_dom"/>
</dbReference>
<dbReference type="InterPro" id="IPR017441">
    <property type="entry name" value="Protein_kinase_ATP_BS"/>
</dbReference>
<dbReference type="InterPro" id="IPR014729">
    <property type="entry name" value="Rossmann-like_a/b/a_fold"/>
</dbReference>
<dbReference type="InterPro" id="IPR008271">
    <property type="entry name" value="Ser/Thr_kinase_AS"/>
</dbReference>
<dbReference type="InterPro" id="IPR051348">
    <property type="entry name" value="U-box_ubiquitin_ligases"/>
</dbReference>
<dbReference type="InterPro" id="IPR003613">
    <property type="entry name" value="Ubox_domain"/>
</dbReference>
<dbReference type="InterPro" id="IPR013083">
    <property type="entry name" value="Znf_RING/FYVE/PHD"/>
</dbReference>
<dbReference type="PANTHER" id="PTHR45647">
    <property type="entry name" value="OS02G0152300 PROTEIN"/>
    <property type="match status" value="1"/>
</dbReference>
<dbReference type="PANTHER" id="PTHR45647:SF97">
    <property type="entry name" value="U-BOX DOMAIN-CONTAINING PROTEIN 51"/>
    <property type="match status" value="1"/>
</dbReference>
<dbReference type="Pfam" id="PF00069">
    <property type="entry name" value="Pkinase"/>
    <property type="match status" value="1"/>
</dbReference>
<dbReference type="Pfam" id="PF04564">
    <property type="entry name" value="U-box"/>
    <property type="match status" value="1"/>
</dbReference>
<dbReference type="SMART" id="SM00220">
    <property type="entry name" value="S_TKc"/>
    <property type="match status" value="1"/>
</dbReference>
<dbReference type="SMART" id="SM00504">
    <property type="entry name" value="Ubox"/>
    <property type="match status" value="1"/>
</dbReference>
<dbReference type="SUPFAM" id="SSF52402">
    <property type="entry name" value="Adenine nucleotide alpha hydrolases-like"/>
    <property type="match status" value="1"/>
</dbReference>
<dbReference type="SUPFAM" id="SSF56112">
    <property type="entry name" value="Protein kinase-like (PK-like)"/>
    <property type="match status" value="1"/>
</dbReference>
<dbReference type="SUPFAM" id="SSF57850">
    <property type="entry name" value="RING/U-box"/>
    <property type="match status" value="1"/>
</dbReference>
<dbReference type="PROSITE" id="PS00107">
    <property type="entry name" value="PROTEIN_KINASE_ATP"/>
    <property type="match status" value="1"/>
</dbReference>
<dbReference type="PROSITE" id="PS50011">
    <property type="entry name" value="PROTEIN_KINASE_DOM"/>
    <property type="match status" value="1"/>
</dbReference>
<dbReference type="PROSITE" id="PS00108">
    <property type="entry name" value="PROTEIN_KINASE_ST"/>
    <property type="match status" value="1"/>
</dbReference>
<dbReference type="PROSITE" id="PS51698">
    <property type="entry name" value="U_BOX"/>
    <property type="match status" value="1"/>
</dbReference>
<protein>
    <recommendedName>
        <fullName>U-box domain-containing protein 51</fullName>
    </recommendedName>
    <alternativeName>
        <fullName>Plant U-box protein 51</fullName>
    </alternativeName>
    <domain>
        <recommendedName>
            <fullName>E3 ubiquitin ligase</fullName>
            <ecNumber>2.3.2.27</ecNumber>
        </recommendedName>
        <alternativeName>
            <fullName evidence="7">RING-type E3 ubiquitin transferase</fullName>
        </alternativeName>
    </domain>
    <domain>
        <recommendedName>
            <fullName>Serine/threonine-protein kinase</fullName>
            <ecNumber>2.7.11.-</ecNumber>
        </recommendedName>
    </domain>
</protein>